<dbReference type="EC" id="6.3.2.8" evidence="1"/>
<dbReference type="EMBL" id="CP000529">
    <property type="protein sequence ID" value="ABM38713.1"/>
    <property type="molecule type" value="Genomic_DNA"/>
</dbReference>
<dbReference type="RefSeq" id="WP_011802784.1">
    <property type="nucleotide sequence ID" value="NC_008781.1"/>
</dbReference>
<dbReference type="SMR" id="A1VST5"/>
<dbReference type="STRING" id="365044.Pnap_3416"/>
<dbReference type="KEGG" id="pna:Pnap_3416"/>
<dbReference type="eggNOG" id="COG0773">
    <property type="taxonomic scope" value="Bacteria"/>
</dbReference>
<dbReference type="HOGENOM" id="CLU_028104_2_2_4"/>
<dbReference type="OrthoDB" id="9804126at2"/>
<dbReference type="UniPathway" id="UPA00219"/>
<dbReference type="Proteomes" id="UP000000644">
    <property type="component" value="Chromosome"/>
</dbReference>
<dbReference type="GO" id="GO:0005737">
    <property type="term" value="C:cytoplasm"/>
    <property type="evidence" value="ECO:0007669"/>
    <property type="project" value="UniProtKB-SubCell"/>
</dbReference>
<dbReference type="GO" id="GO:0005524">
    <property type="term" value="F:ATP binding"/>
    <property type="evidence" value="ECO:0007669"/>
    <property type="project" value="UniProtKB-UniRule"/>
</dbReference>
<dbReference type="GO" id="GO:0008763">
    <property type="term" value="F:UDP-N-acetylmuramate-L-alanine ligase activity"/>
    <property type="evidence" value="ECO:0007669"/>
    <property type="project" value="UniProtKB-UniRule"/>
</dbReference>
<dbReference type="GO" id="GO:0051301">
    <property type="term" value="P:cell division"/>
    <property type="evidence" value="ECO:0007669"/>
    <property type="project" value="UniProtKB-KW"/>
</dbReference>
<dbReference type="GO" id="GO:0071555">
    <property type="term" value="P:cell wall organization"/>
    <property type="evidence" value="ECO:0007669"/>
    <property type="project" value="UniProtKB-KW"/>
</dbReference>
<dbReference type="GO" id="GO:0009252">
    <property type="term" value="P:peptidoglycan biosynthetic process"/>
    <property type="evidence" value="ECO:0007669"/>
    <property type="project" value="UniProtKB-UniRule"/>
</dbReference>
<dbReference type="GO" id="GO:0008360">
    <property type="term" value="P:regulation of cell shape"/>
    <property type="evidence" value="ECO:0007669"/>
    <property type="project" value="UniProtKB-KW"/>
</dbReference>
<dbReference type="FunFam" id="3.40.1190.10:FF:000001">
    <property type="entry name" value="UDP-N-acetylmuramate--L-alanine ligase"/>
    <property type="match status" value="1"/>
</dbReference>
<dbReference type="Gene3D" id="3.90.190.20">
    <property type="entry name" value="Mur ligase, C-terminal domain"/>
    <property type="match status" value="1"/>
</dbReference>
<dbReference type="Gene3D" id="3.40.1190.10">
    <property type="entry name" value="Mur-like, catalytic domain"/>
    <property type="match status" value="1"/>
</dbReference>
<dbReference type="Gene3D" id="3.40.50.720">
    <property type="entry name" value="NAD(P)-binding Rossmann-like Domain"/>
    <property type="match status" value="1"/>
</dbReference>
<dbReference type="HAMAP" id="MF_00046">
    <property type="entry name" value="MurC"/>
    <property type="match status" value="1"/>
</dbReference>
<dbReference type="InterPro" id="IPR036565">
    <property type="entry name" value="Mur-like_cat_sf"/>
</dbReference>
<dbReference type="InterPro" id="IPR004101">
    <property type="entry name" value="Mur_ligase_C"/>
</dbReference>
<dbReference type="InterPro" id="IPR036615">
    <property type="entry name" value="Mur_ligase_C_dom_sf"/>
</dbReference>
<dbReference type="InterPro" id="IPR013221">
    <property type="entry name" value="Mur_ligase_cen"/>
</dbReference>
<dbReference type="InterPro" id="IPR000713">
    <property type="entry name" value="Mur_ligase_N"/>
</dbReference>
<dbReference type="InterPro" id="IPR050061">
    <property type="entry name" value="MurCDEF_pg_biosynth"/>
</dbReference>
<dbReference type="InterPro" id="IPR005758">
    <property type="entry name" value="UDP-N-AcMur_Ala_ligase_MurC"/>
</dbReference>
<dbReference type="NCBIfam" id="TIGR01082">
    <property type="entry name" value="murC"/>
    <property type="match status" value="1"/>
</dbReference>
<dbReference type="PANTHER" id="PTHR43445:SF3">
    <property type="entry name" value="UDP-N-ACETYLMURAMATE--L-ALANINE LIGASE"/>
    <property type="match status" value="1"/>
</dbReference>
<dbReference type="PANTHER" id="PTHR43445">
    <property type="entry name" value="UDP-N-ACETYLMURAMATE--L-ALANINE LIGASE-RELATED"/>
    <property type="match status" value="1"/>
</dbReference>
<dbReference type="Pfam" id="PF01225">
    <property type="entry name" value="Mur_ligase"/>
    <property type="match status" value="1"/>
</dbReference>
<dbReference type="Pfam" id="PF02875">
    <property type="entry name" value="Mur_ligase_C"/>
    <property type="match status" value="1"/>
</dbReference>
<dbReference type="Pfam" id="PF08245">
    <property type="entry name" value="Mur_ligase_M"/>
    <property type="match status" value="1"/>
</dbReference>
<dbReference type="SUPFAM" id="SSF51984">
    <property type="entry name" value="MurCD N-terminal domain"/>
    <property type="match status" value="1"/>
</dbReference>
<dbReference type="SUPFAM" id="SSF53623">
    <property type="entry name" value="MurD-like peptide ligases, catalytic domain"/>
    <property type="match status" value="1"/>
</dbReference>
<dbReference type="SUPFAM" id="SSF53244">
    <property type="entry name" value="MurD-like peptide ligases, peptide-binding domain"/>
    <property type="match status" value="1"/>
</dbReference>
<gene>
    <name evidence="1" type="primary">murC</name>
    <name type="ordered locus">Pnap_3416</name>
</gene>
<sequence>MKHAIKHIHFIGLGGAGMSGIAEVLHNLGYVISGSDLSDSATLQRLAGLGIQTFVGHAAANLVDVDAVVTSTAVHADNPEVLAAREKHIPVVPRALMLAELMRFKQGIAIAGTHGKTTTTSLVASVLAEGGLDPTFVIGGRLNSAGANAKLGSGDYIVVEADESDASFLNLLPVMAVVTNIDADHMETYGHDFGNLKKAFVDFLRRMPFYGTAILCTDDPVVRQIVPEMSCPITSYGLNEEAQVRAINVRAVGAQMHFTAQRRNGVKLPDLDVVLNLAGQHNVLNALAAIAVAVELNVPDAAVQKALSDFTGVGRRFQSYGELPARDGGRFTVIEDYGHHPVEVAATLSAARGAFPGRRLVLAFQPHRYSRTRDCFEDFVKVISSHADAVLLAEVYAAGETPIVAADGRSLARALRVAGKVEPVFVDSIHDMPQAIVDAAQDGDIVMCMGAGSIGLVPAKVVAMLQFQEVNVLEGQCA</sequence>
<protein>
    <recommendedName>
        <fullName evidence="1">UDP-N-acetylmuramate--L-alanine ligase</fullName>
        <ecNumber evidence="1">6.3.2.8</ecNumber>
    </recommendedName>
    <alternativeName>
        <fullName evidence="1">UDP-N-acetylmuramoyl-L-alanine synthetase</fullName>
    </alternativeName>
</protein>
<feature type="chain" id="PRO_1000004384" description="UDP-N-acetylmuramate--L-alanine ligase">
    <location>
        <begin position="1"/>
        <end position="478"/>
    </location>
</feature>
<feature type="binding site" evidence="1">
    <location>
        <begin position="112"/>
        <end position="118"/>
    </location>
    <ligand>
        <name>ATP</name>
        <dbReference type="ChEBI" id="CHEBI:30616"/>
    </ligand>
</feature>
<keyword id="KW-0067">ATP-binding</keyword>
<keyword id="KW-0131">Cell cycle</keyword>
<keyword id="KW-0132">Cell division</keyword>
<keyword id="KW-0133">Cell shape</keyword>
<keyword id="KW-0961">Cell wall biogenesis/degradation</keyword>
<keyword id="KW-0963">Cytoplasm</keyword>
<keyword id="KW-0436">Ligase</keyword>
<keyword id="KW-0547">Nucleotide-binding</keyword>
<keyword id="KW-0573">Peptidoglycan synthesis</keyword>
<keyword id="KW-1185">Reference proteome</keyword>
<proteinExistence type="inferred from homology"/>
<name>MURC_POLNA</name>
<accession>A1VST5</accession>
<comment type="function">
    <text evidence="1">Cell wall formation.</text>
</comment>
<comment type="catalytic activity">
    <reaction evidence="1">
        <text>UDP-N-acetyl-alpha-D-muramate + L-alanine + ATP = UDP-N-acetyl-alpha-D-muramoyl-L-alanine + ADP + phosphate + H(+)</text>
        <dbReference type="Rhea" id="RHEA:23372"/>
        <dbReference type="ChEBI" id="CHEBI:15378"/>
        <dbReference type="ChEBI" id="CHEBI:30616"/>
        <dbReference type="ChEBI" id="CHEBI:43474"/>
        <dbReference type="ChEBI" id="CHEBI:57972"/>
        <dbReference type="ChEBI" id="CHEBI:70757"/>
        <dbReference type="ChEBI" id="CHEBI:83898"/>
        <dbReference type="ChEBI" id="CHEBI:456216"/>
        <dbReference type="EC" id="6.3.2.8"/>
    </reaction>
</comment>
<comment type="pathway">
    <text evidence="1">Cell wall biogenesis; peptidoglycan biosynthesis.</text>
</comment>
<comment type="subcellular location">
    <subcellularLocation>
        <location evidence="1">Cytoplasm</location>
    </subcellularLocation>
</comment>
<comment type="similarity">
    <text evidence="1">Belongs to the MurCDEF family.</text>
</comment>
<reference key="1">
    <citation type="journal article" date="2009" name="Environ. Microbiol.">
        <title>The genome of Polaromonas naphthalenivorans strain CJ2, isolated from coal tar-contaminated sediment, reveals physiological and metabolic versatility and evolution through extensive horizontal gene transfer.</title>
        <authorList>
            <person name="Yagi J.M."/>
            <person name="Sims D."/>
            <person name="Brettin T."/>
            <person name="Bruce D."/>
            <person name="Madsen E.L."/>
        </authorList>
    </citation>
    <scope>NUCLEOTIDE SEQUENCE [LARGE SCALE GENOMIC DNA]</scope>
    <source>
        <strain>CJ2</strain>
    </source>
</reference>
<organism>
    <name type="scientific">Polaromonas naphthalenivorans (strain CJ2)</name>
    <dbReference type="NCBI Taxonomy" id="365044"/>
    <lineage>
        <taxon>Bacteria</taxon>
        <taxon>Pseudomonadati</taxon>
        <taxon>Pseudomonadota</taxon>
        <taxon>Betaproteobacteria</taxon>
        <taxon>Burkholderiales</taxon>
        <taxon>Comamonadaceae</taxon>
        <taxon>Polaromonas</taxon>
    </lineage>
</organism>
<evidence type="ECO:0000255" key="1">
    <source>
        <dbReference type="HAMAP-Rule" id="MF_00046"/>
    </source>
</evidence>